<evidence type="ECO:0000269" key="1">
    <source>
    </source>
</evidence>
<evidence type="ECO:0000305" key="2"/>
<proteinExistence type="evidence at protein level"/>
<protein>
    <recommendedName>
        <fullName>M-oxotoxin-Ot2d</fullName>
        <shortName>M-OXTX-Ot2d</shortName>
    </recommendedName>
    <alternativeName>
        <fullName>Oxki2d</fullName>
    </alternativeName>
    <alternativeName>
        <fullName>Oxyopinin-2d</fullName>
    </alternativeName>
</protein>
<comment type="function">
    <text evidence="1">Disrupts biological membranes, particularly those rich in phosphocholine. Has antimicrobial activity against Gram-negative bacterium E.coli, Gram-positive bacteria B.subtilis and S.aureus, and hemolytic activity against sheep, pig and guinea pig red blood cells. Has insecticidal activity against S.frugiperda ovarian cells by opening non-selective ion channels. Enhances the insecticidal activity of spider venom neurotoxic peptides.</text>
</comment>
<comment type="subcellular location">
    <subcellularLocation>
        <location evidence="1">Secreted</location>
    </subcellularLocation>
</comment>
<comment type="tissue specificity">
    <text evidence="1">Expressed by the venom gland.</text>
</comment>
<comment type="mass spectrometry"/>
<comment type="similarity">
    <text evidence="2">Belongs to the cationic peptide 02 (oxyopinin-2) family.</text>
</comment>
<feature type="peptide" id="PRO_0000045034" description="M-oxotoxin-Ot2d">
    <location>
        <begin position="1"/>
        <end position="37"/>
    </location>
</feature>
<accession>P83251</accession>
<reference key="1">
    <citation type="journal article" date="2002" name="J. Biol. Chem.">
        <title>Oxyopinins, large amphipathic peptides isolated from the venom of the wolf spider Oxyopes kitabensis with cytolytic properties and positive insecticidal cooperativity with spider neurotoxins.</title>
        <authorList>
            <person name="Corzo G."/>
            <person name="Villegas E."/>
            <person name="Gomez-Lagunas F."/>
            <person name="Possani L.D."/>
            <person name="Belokoneva O.S."/>
            <person name="Nakajima T."/>
        </authorList>
    </citation>
    <scope>PROTEIN SEQUENCE</scope>
    <scope>FUNCTION</scope>
    <scope>TISSUE SPECIFICITY</scope>
    <scope>SUBCELLULAR LOCATION</scope>
    <scope>MASS SPECTROMETRY</scope>
    <scope>CIRCULAR DICHROISM ANALYSIS</scope>
    <source>
        <tissue>Venom</tissue>
    </source>
</reference>
<name>TOP2D_OXYTA</name>
<sequence>GKFSVFSKILRSIAKVFKGVGKVRKQFKTASDLDKNQ</sequence>
<organism>
    <name type="scientific">Oxyopes takobius</name>
    <name type="common">Lynx spider</name>
    <name type="synonym">Oxyopes foliiformis</name>
    <dbReference type="NCBI Taxonomy" id="666126"/>
    <lineage>
        <taxon>Eukaryota</taxon>
        <taxon>Metazoa</taxon>
        <taxon>Ecdysozoa</taxon>
        <taxon>Arthropoda</taxon>
        <taxon>Chelicerata</taxon>
        <taxon>Arachnida</taxon>
        <taxon>Araneae</taxon>
        <taxon>Araneomorphae</taxon>
        <taxon>Entelegynae</taxon>
        <taxon>Lycosoidea</taxon>
        <taxon>Oxyopidae</taxon>
        <taxon>Oxyopes</taxon>
    </lineage>
</organism>
<keyword id="KW-0044">Antibiotic</keyword>
<keyword id="KW-0929">Antimicrobial</keyword>
<keyword id="KW-0204">Cytolysis</keyword>
<keyword id="KW-0903">Direct protein sequencing</keyword>
<keyword id="KW-0354">Hemolysis</keyword>
<keyword id="KW-0964">Secreted</keyword>
<keyword id="KW-0800">Toxin</keyword>
<dbReference type="SMR" id="P83251"/>
<dbReference type="ArachnoServer" id="AS000189">
    <property type="toxin name" value="M-oxotoxin-Ot2d"/>
</dbReference>
<dbReference type="GO" id="GO:0005576">
    <property type="term" value="C:extracellular region"/>
    <property type="evidence" value="ECO:0007669"/>
    <property type="project" value="UniProtKB-SubCell"/>
</dbReference>
<dbReference type="GO" id="GO:0090729">
    <property type="term" value="F:toxin activity"/>
    <property type="evidence" value="ECO:0007669"/>
    <property type="project" value="UniProtKB-KW"/>
</dbReference>
<dbReference type="GO" id="GO:0042742">
    <property type="term" value="P:defense response to bacterium"/>
    <property type="evidence" value="ECO:0007669"/>
    <property type="project" value="UniProtKB-KW"/>
</dbReference>
<dbReference type="GO" id="GO:0019836">
    <property type="term" value="P:symbiont-mediated hemolysis of host erythrocyte"/>
    <property type="evidence" value="ECO:0007669"/>
    <property type="project" value="InterPro"/>
</dbReference>
<dbReference type="InterPro" id="IPR012522">
    <property type="entry name" value="Antimicrobial_3"/>
</dbReference>
<dbReference type="Pfam" id="PF08025">
    <property type="entry name" value="Antimicrobial_3"/>
    <property type="match status" value="1"/>
</dbReference>